<feature type="chain" id="PRO_0000215754" description="ATP-dependent Clp protease adapter protein ClpS">
    <location>
        <begin position="1"/>
        <end position="98"/>
    </location>
</feature>
<sequence length="98" mass="11151">MISNAATSTPDRLTSTVRKTYPNFKVIVLNDDFNTFQHVSDCLLKYIPGMTGDRAWELTNQVHFDGLAIVWVGPQEQAELYHQQLRREGLTMAPLEKA</sequence>
<proteinExistence type="inferred from homology"/>
<reference key="1">
    <citation type="journal article" date="1996" name="DNA Res.">
        <title>Sequence analysis of the genome of the unicellular cyanobacterium Synechocystis sp. strain PCC6803. II. Sequence determination of the entire genome and assignment of potential protein-coding regions.</title>
        <authorList>
            <person name="Kaneko T."/>
            <person name="Sato S."/>
            <person name="Kotani H."/>
            <person name="Tanaka A."/>
            <person name="Asamizu E."/>
            <person name="Nakamura Y."/>
            <person name="Miyajima N."/>
            <person name="Hirosawa M."/>
            <person name="Sugiura M."/>
            <person name="Sasamoto S."/>
            <person name="Kimura T."/>
            <person name="Hosouchi T."/>
            <person name="Matsuno A."/>
            <person name="Muraki A."/>
            <person name="Nakazaki N."/>
            <person name="Naruo K."/>
            <person name="Okumura S."/>
            <person name="Shimpo S."/>
            <person name="Takeuchi C."/>
            <person name="Wada T."/>
            <person name="Watanabe A."/>
            <person name="Yamada M."/>
            <person name="Yasuda M."/>
            <person name="Tabata S."/>
        </authorList>
    </citation>
    <scope>NUCLEOTIDE SEQUENCE [LARGE SCALE GENOMIC DNA]</scope>
    <source>
        <strain>ATCC 27184 / PCC 6803 / Kazusa</strain>
    </source>
</reference>
<organism>
    <name type="scientific">Synechocystis sp. (strain ATCC 27184 / PCC 6803 / Kazusa)</name>
    <dbReference type="NCBI Taxonomy" id="1111708"/>
    <lineage>
        <taxon>Bacteria</taxon>
        <taxon>Bacillati</taxon>
        <taxon>Cyanobacteriota</taxon>
        <taxon>Cyanophyceae</taxon>
        <taxon>Synechococcales</taxon>
        <taxon>Merismopediaceae</taxon>
        <taxon>Synechocystis</taxon>
    </lineage>
</organism>
<gene>
    <name evidence="1" type="primary">clpS</name>
    <name type="ordered locus">ssl3379</name>
</gene>
<comment type="function">
    <text evidence="1">Involved in the modulation of the specificity of the ClpAP-mediated ATP-dependent protein degradation.</text>
</comment>
<comment type="subunit">
    <text evidence="1">Binds to the N-terminal domain of the chaperone ClpA.</text>
</comment>
<comment type="similarity">
    <text evidence="1">Belongs to the ClpS family.</text>
</comment>
<accession>P73634</accession>
<name>CLPS_SYNY3</name>
<evidence type="ECO:0000255" key="1">
    <source>
        <dbReference type="HAMAP-Rule" id="MF_00302"/>
    </source>
</evidence>
<keyword id="KW-1185">Reference proteome</keyword>
<protein>
    <recommendedName>
        <fullName evidence="1">ATP-dependent Clp protease adapter protein ClpS</fullName>
    </recommendedName>
</protein>
<dbReference type="EMBL" id="BA000022">
    <property type="protein sequence ID" value="BAA17679.1"/>
    <property type="molecule type" value="Genomic_DNA"/>
</dbReference>
<dbReference type="PIR" id="S77121">
    <property type="entry name" value="S77121"/>
</dbReference>
<dbReference type="SMR" id="P73634"/>
<dbReference type="IntAct" id="P73634">
    <property type="interactions" value="2"/>
</dbReference>
<dbReference type="STRING" id="1148.gene:10498546"/>
<dbReference type="PaxDb" id="1148-1652760"/>
<dbReference type="EnsemblBacteria" id="BAA17679">
    <property type="protein sequence ID" value="BAA17679"/>
    <property type="gene ID" value="BAA17679"/>
</dbReference>
<dbReference type="KEGG" id="syn:ssl3379"/>
<dbReference type="eggNOG" id="COG2127">
    <property type="taxonomic scope" value="Bacteria"/>
</dbReference>
<dbReference type="InParanoid" id="P73634"/>
<dbReference type="PhylomeDB" id="P73634"/>
<dbReference type="Proteomes" id="UP000001425">
    <property type="component" value="Chromosome"/>
</dbReference>
<dbReference type="GO" id="GO:0030163">
    <property type="term" value="P:protein catabolic process"/>
    <property type="evidence" value="ECO:0007669"/>
    <property type="project" value="InterPro"/>
</dbReference>
<dbReference type="GO" id="GO:0006508">
    <property type="term" value="P:proteolysis"/>
    <property type="evidence" value="ECO:0007669"/>
    <property type="project" value="UniProtKB-UniRule"/>
</dbReference>
<dbReference type="FunFam" id="3.30.1390.10:FF:000012">
    <property type="entry name" value="ATP-dependent Clp protease adapter protein ClpS"/>
    <property type="match status" value="1"/>
</dbReference>
<dbReference type="Gene3D" id="3.30.1390.10">
    <property type="match status" value="1"/>
</dbReference>
<dbReference type="HAMAP" id="MF_00302">
    <property type="entry name" value="ClpS"/>
    <property type="match status" value="1"/>
</dbReference>
<dbReference type="InterPro" id="IPR022935">
    <property type="entry name" value="ClpS"/>
</dbReference>
<dbReference type="InterPro" id="IPR003769">
    <property type="entry name" value="ClpS_core"/>
</dbReference>
<dbReference type="InterPro" id="IPR014719">
    <property type="entry name" value="Ribosomal_bL12_C/ClpS-like"/>
</dbReference>
<dbReference type="NCBIfam" id="NF009563">
    <property type="entry name" value="PRK13019.1-3"/>
    <property type="match status" value="1"/>
</dbReference>
<dbReference type="PANTHER" id="PTHR33473:SF3">
    <property type="entry name" value="ATP-DEPENDENT CLP PROTEASE ADAPTER PROTEIN CLPS"/>
    <property type="match status" value="1"/>
</dbReference>
<dbReference type="PANTHER" id="PTHR33473">
    <property type="entry name" value="ATP-DEPENDENT CLP PROTEASE ADAPTER PROTEIN CLPS1, CHLOROPLASTIC"/>
    <property type="match status" value="1"/>
</dbReference>
<dbReference type="Pfam" id="PF02617">
    <property type="entry name" value="ClpS"/>
    <property type="match status" value="1"/>
</dbReference>
<dbReference type="SUPFAM" id="SSF54736">
    <property type="entry name" value="ClpS-like"/>
    <property type="match status" value="1"/>
</dbReference>